<accession>A0A482GDX1</accession>
<sequence length="631" mass="69554">MGLDVRNNGNDNVEIRAAETRTAQRADEALETAADFAGQPKVTHTMRTINRTLSRRISRNTGSEQVLNLRRLMEKYLEDTRFKDDFIFVAVDPNQYSVPYPTLVVMSGAKVGDHNHFFGYVLPLVAGLAPLPRREEQGPHGNILVPRTWVDNLNGTFINEVMAAMYAAIGGKSNGTARIAGLAVVTNEITAESAHLATTLLSAADNAIQTAIEIRLGDKLGLPQFNLGMMASDQPISSVQYNTSGMQDSDIVGNPVRSDITVTISNRIRQAMSDYDSQQRLVATTGYIDLTYSPQNPTFNQGPVLVNGYPVPPTVQYQPRYVMTSAYPLELDAFTPNTFVLGLIGTIATLNSGMAWAQSLISNAARGIGPHNPGALAMVLDPEVTAPLDLSTQTNEQIYKFLQQVLYPSLLISIDVPEEGEYSWLLRMIPAAEKIYTGKVEGEVREISEGYKALYRAFDDVTLGCFSKKYQYGLPLVYATGNRIPLGHYNHQDGHRHDIRDMDDLYMMNITNPDTVEAWEDSFDRTDMTMSQRVVARHEIIDRVLSGSWEQTGWAMRYDFDPLALQALIEAAADAGFTIRPENIQHLAGTAVRGNMAARARGLGNISGNIYARSDRPNVGVNNMGGAFNLF</sequence>
<comment type="function">
    <text evidence="1 5">Self-assembles to form a proteinaceous shell that encloses the viral DNA and compartmentalizes proteins and DNA during viral infection (Probable). This micrometer-scale compartment contains narrow pores and is the site of viral replication, with the proteins involved in DNA replication localized inside (By similarity). Provides a surface for docking of capsids during packaging (By similarity). Probably protects the viral genome against host defenses (Probable).</text>
</comment>
<comment type="subunit">
    <text evidence="2">Homotetramer (PubMed:35922510). The tetrameric protomers further assemble as a square grid (PubMed:35922510).</text>
</comment>
<comment type="subcellular location">
    <subcellularLocation>
        <location evidence="2">Host cytoplasm</location>
    </subcellularLocation>
    <text evidence="2">In infected host cells assembles as a nucleus-like structure in the host cytoplasm.</text>
</comment>
<organismHost>
    <name type="scientific">Escherichia coli</name>
    <dbReference type="NCBI Taxonomy" id="562"/>
</organismHost>
<reference key="1">
    <citation type="journal article" date="2019" name="Viruses">
        <title>Still Something to Discover: Novel Insights into Escherichia coli Phage Diversity and Taxonomy.</title>
        <authorList>
            <person name="Korf I.H.E."/>
            <person name="Meier-Kolthoff J.P."/>
            <person name="Adriaenssens E.M."/>
            <person name="Kropinski A.M."/>
            <person name="Nimtz M."/>
            <person name="Rohde M."/>
            <person name="van Raaij M.J."/>
            <person name="Wittmann J."/>
        </authorList>
    </citation>
    <scope>NUCLEOTIDE SEQUENCE [LARGE SCALE GENOMIC DNA]</scope>
</reference>
<reference key="2">
    <citation type="journal article" date="2022" name="Nature">
        <title>Architecture and self-assembly of the jumbo bacteriophage nuclear shell.</title>
        <authorList>
            <person name="Laughlin T.G."/>
            <person name="Deep A."/>
            <person name="Prichard A.M."/>
            <person name="Seitz C."/>
            <person name="Gu Y."/>
            <person name="Enustun E."/>
            <person name="Suslov S."/>
            <person name="Khanna K."/>
            <person name="Birkholz E.A."/>
            <person name="Armbruster E."/>
            <person name="McCammon J.A."/>
            <person name="Amaro R.E."/>
            <person name="Pogliano J."/>
            <person name="Corbett K.D."/>
            <person name="Villa E."/>
        </authorList>
    </citation>
    <scope>STRUCTURE BY ELECTRON MICROSCOPY (30.0 ANGSTROMS) OF NUCLEAR SHELL</scope>
    <scope>STRUCTURE BY ELECTRON MICROSCOPY (2.3 ANGSTROMS) OF PROTOMER</scope>
    <scope>FUNCTION</scope>
    <scope>SUBCELLULAR LOCATION</scope>
    <scope>SUBUNIT</scope>
</reference>
<protein>
    <recommendedName>
        <fullName evidence="3">Chimallin</fullName>
        <shortName evidence="3">ChmA</shortName>
    </recommendedName>
    <alternativeName>
        <fullName evidence="4">Phage nucleus enclosure protein</fullName>
        <shortName evidence="4">PhuN</shortName>
    </alternativeName>
    <alternativeName>
        <fullName evidence="4">gene product 189</fullName>
        <shortName evidence="4">gp189</shortName>
    </alternativeName>
</protein>
<name>CHMA_BPGOS</name>
<proteinExistence type="evidence at protein level"/>
<feature type="chain" id="PRO_0000456873" description="Chimallin">
    <location>
        <begin position="1"/>
        <end position="631"/>
    </location>
</feature>
<feature type="helix" evidence="7">
    <location>
        <begin position="46"/>
        <end position="48"/>
    </location>
</feature>
<feature type="helix" evidence="8">
    <location>
        <begin position="49"/>
        <end position="52"/>
    </location>
</feature>
<feature type="helix" evidence="8">
    <location>
        <begin position="65"/>
        <end position="77"/>
    </location>
</feature>
<feature type="helix" evidence="8">
    <location>
        <begin position="83"/>
        <end position="85"/>
    </location>
</feature>
<feature type="strand" evidence="8">
    <location>
        <begin position="87"/>
        <end position="91"/>
    </location>
</feature>
<feature type="turn" evidence="8">
    <location>
        <begin position="93"/>
        <end position="95"/>
    </location>
</feature>
<feature type="strand" evidence="8">
    <location>
        <begin position="102"/>
        <end position="111"/>
    </location>
</feature>
<feature type="strand" evidence="8">
    <location>
        <begin position="114"/>
        <end position="124"/>
    </location>
</feature>
<feature type="strand" evidence="8">
    <location>
        <begin position="134"/>
        <end position="137"/>
    </location>
</feature>
<feature type="strand" evidence="8">
    <location>
        <begin position="139"/>
        <end position="145"/>
    </location>
</feature>
<feature type="helix" evidence="8">
    <location>
        <begin position="149"/>
        <end position="152"/>
    </location>
</feature>
<feature type="helix" evidence="8">
    <location>
        <begin position="155"/>
        <end position="169"/>
    </location>
</feature>
<feature type="helix" evidence="8">
    <location>
        <begin position="172"/>
        <end position="174"/>
    </location>
</feature>
<feature type="strand" evidence="8">
    <location>
        <begin position="176"/>
        <end position="182"/>
    </location>
</feature>
<feature type="helix" evidence="8">
    <location>
        <begin position="194"/>
        <end position="220"/>
    </location>
</feature>
<feature type="helix" evidence="8">
    <location>
        <begin position="227"/>
        <end position="230"/>
    </location>
</feature>
<feature type="strand" evidence="8">
    <location>
        <begin position="233"/>
        <end position="241"/>
    </location>
</feature>
<feature type="strand" evidence="8">
    <location>
        <begin position="251"/>
        <end position="253"/>
    </location>
</feature>
<feature type="strand" evidence="8">
    <location>
        <begin position="259"/>
        <end position="269"/>
    </location>
</feature>
<feature type="turn" evidence="8">
    <location>
        <begin position="271"/>
        <end position="273"/>
    </location>
</feature>
<feature type="strand" evidence="8">
    <location>
        <begin position="276"/>
        <end position="292"/>
    </location>
</feature>
<feature type="strand" evidence="8">
    <location>
        <begin position="317"/>
        <end position="330"/>
    </location>
</feature>
<feature type="helix" evidence="8">
    <location>
        <begin position="336"/>
        <end position="350"/>
    </location>
</feature>
<feature type="strand" evidence="8">
    <location>
        <begin position="352"/>
        <end position="354"/>
    </location>
</feature>
<feature type="helix" evidence="8">
    <location>
        <begin position="357"/>
        <end position="363"/>
    </location>
</feature>
<feature type="helix" evidence="7">
    <location>
        <begin position="364"/>
        <end position="366"/>
    </location>
</feature>
<feature type="helix" evidence="8">
    <location>
        <begin position="373"/>
        <end position="375"/>
    </location>
</feature>
<feature type="helix" evidence="8">
    <location>
        <begin position="376"/>
        <end position="380"/>
    </location>
</feature>
<feature type="helix" evidence="8">
    <location>
        <begin position="395"/>
        <end position="402"/>
    </location>
</feature>
<feature type="turn" evidence="8">
    <location>
        <begin position="403"/>
        <end position="405"/>
    </location>
</feature>
<feature type="strand" evidence="8">
    <location>
        <begin position="410"/>
        <end position="420"/>
    </location>
</feature>
<feature type="helix" evidence="8">
    <location>
        <begin position="423"/>
        <end position="426"/>
    </location>
</feature>
<feature type="helix" evidence="8">
    <location>
        <begin position="428"/>
        <end position="431"/>
    </location>
</feature>
<feature type="strand" evidence="8">
    <location>
        <begin position="442"/>
        <end position="444"/>
    </location>
</feature>
<feature type="helix" evidence="8">
    <location>
        <begin position="449"/>
        <end position="461"/>
    </location>
</feature>
<feature type="turn" evidence="8">
    <location>
        <begin position="462"/>
        <end position="464"/>
    </location>
</feature>
<feature type="helix" evidence="8">
    <location>
        <begin position="466"/>
        <end position="469"/>
    </location>
</feature>
<feature type="strand" evidence="8">
    <location>
        <begin position="477"/>
        <end position="490"/>
    </location>
</feature>
<feature type="strand" evidence="8">
    <location>
        <begin position="494"/>
        <end position="498"/>
    </location>
</feature>
<feature type="helix" evidence="8">
    <location>
        <begin position="499"/>
        <end position="501"/>
    </location>
</feature>
<feature type="helix" evidence="8">
    <location>
        <begin position="504"/>
        <end position="510"/>
    </location>
</feature>
<feature type="helix" evidence="8">
    <location>
        <begin position="513"/>
        <end position="524"/>
    </location>
</feature>
<feature type="strand" evidence="8">
    <location>
        <begin position="526"/>
        <end position="528"/>
    </location>
</feature>
<feature type="helix" evidence="8">
    <location>
        <begin position="530"/>
        <end position="545"/>
    </location>
</feature>
<feature type="strand" evidence="8">
    <location>
        <begin position="550"/>
        <end position="560"/>
    </location>
</feature>
<feature type="helix" evidence="8">
    <location>
        <begin position="562"/>
        <end position="574"/>
    </location>
</feature>
<feature type="strand" evidence="8">
    <location>
        <begin position="579"/>
        <end position="583"/>
    </location>
</feature>
<feature type="helix" evidence="8">
    <location>
        <begin position="599"/>
        <end position="601"/>
    </location>
</feature>
<feature type="helix" evidence="8">
    <location>
        <begin position="608"/>
        <end position="610"/>
    </location>
</feature>
<organism>
    <name type="scientific">Escherichia phage vB_EcoM_Goslar</name>
    <dbReference type="NCBI Taxonomy" id="2502409"/>
    <lineage>
        <taxon>Viruses</taxon>
        <taxon>Duplodnaviria</taxon>
        <taxon>Heunggongvirae</taxon>
        <taxon>Uroviricota</taxon>
        <taxon>Caudoviricetes</taxon>
        <taxon>Goslarvirus</taxon>
        <taxon>Goslarvirus goslar</taxon>
    </lineage>
</organism>
<evidence type="ECO:0000250" key="1">
    <source>
        <dbReference type="UniProtKB" id="B3FIW8"/>
    </source>
</evidence>
<evidence type="ECO:0000269" key="2">
    <source>
    </source>
</evidence>
<evidence type="ECO:0000303" key="3">
    <source>
    </source>
</evidence>
<evidence type="ECO:0000305" key="4"/>
<evidence type="ECO:0000305" key="5">
    <source>
    </source>
</evidence>
<evidence type="ECO:0000312" key="6">
    <source>
        <dbReference type="EMBL" id="QBO63981.1"/>
    </source>
</evidence>
<evidence type="ECO:0007829" key="7">
    <source>
        <dbReference type="PDB" id="7SQU"/>
    </source>
</evidence>
<evidence type="ECO:0007829" key="8">
    <source>
        <dbReference type="PDB" id="7SQV"/>
    </source>
</evidence>
<dbReference type="EMBL" id="MK327938">
    <property type="protein sequence ID" value="QBO63981.1"/>
    <property type="molecule type" value="Genomic_DNA"/>
</dbReference>
<dbReference type="PDB" id="7SQT">
    <property type="method" value="EM"/>
    <property type="resolution" value="4.00 A"/>
    <property type="chains" value="A/B/C/D/E/F/G/H/I/J/K/L/M/N/O/P/Q/R/S/T/U/V/X/Y=1-631"/>
</dbReference>
<dbReference type="PDB" id="7SQU">
    <property type="method" value="EM"/>
    <property type="resolution" value="2.60 A"/>
    <property type="chains" value="A/B/C/D/E/F/G/H/I/J/K/L=1-631"/>
</dbReference>
<dbReference type="PDB" id="7SQV">
    <property type="method" value="EM"/>
    <property type="resolution" value="2.30 A"/>
    <property type="chains" value="A/B/C/D=1-631"/>
</dbReference>
<dbReference type="PDBsum" id="7SQT"/>
<dbReference type="PDBsum" id="7SQU"/>
<dbReference type="PDBsum" id="7SQV"/>
<dbReference type="EMDB" id="EMD-25394"/>
<dbReference type="EMDB" id="EMD-25395"/>
<dbReference type="EMDB" id="EMD-25396"/>
<dbReference type="SMR" id="A0A482GDX1"/>
<dbReference type="Proteomes" id="UP000294673">
    <property type="component" value="Segment"/>
</dbReference>
<dbReference type="GO" id="GO:0030430">
    <property type="term" value="C:host cell cytoplasm"/>
    <property type="evidence" value="ECO:0007669"/>
    <property type="project" value="UniProtKB-SubCell"/>
</dbReference>
<gene>
    <name evidence="6" type="ORF">Goslar_00189</name>
</gene>
<keyword id="KW-0002">3D-structure</keyword>
<keyword id="KW-1035">Host cytoplasm</keyword>
<keyword id="KW-1185">Reference proteome</keyword>